<protein>
    <recommendedName>
        <fullName evidence="1">Ribonuclease Z</fullName>
        <shortName evidence="1">RNase Z</shortName>
        <ecNumber evidence="1">3.1.26.11</ecNumber>
    </recommendedName>
    <alternativeName>
        <fullName evidence="1">tRNA 3 endonuclease</fullName>
    </alternativeName>
    <alternativeName>
        <fullName evidence="1">tRNase Z</fullName>
    </alternativeName>
</protein>
<evidence type="ECO:0000255" key="1">
    <source>
        <dbReference type="HAMAP-Rule" id="MF_01818"/>
    </source>
</evidence>
<reference key="1">
    <citation type="journal article" date="2009" name="Vaccine">
        <title>Whole genome sequence analysis of Mycobacterium bovis bacillus Calmette-Guerin (BCG) Tokyo 172: a comparative study of BCG vaccine substrains.</title>
        <authorList>
            <person name="Seki M."/>
            <person name="Honda I."/>
            <person name="Fujita I."/>
            <person name="Yano I."/>
            <person name="Yamamoto S."/>
            <person name="Koyama A."/>
        </authorList>
    </citation>
    <scope>NUCLEOTIDE SEQUENCE [LARGE SCALE GENOMIC DNA]</scope>
    <source>
        <strain>BCG / Tokyo 172 / ATCC 35737 / TMC 1019</strain>
    </source>
</reference>
<accession>C1AQX2</accession>
<name>RNZ_MYCBT</name>
<sequence>MLEITLLGTGSPIPDPDRAGPSTLVRAGAQAFLVDCGRGVLQRAAAVGVGAAGLSAVLLTHLHSDHIAELGDVLITSWVTNFAADPAPLPIIGPPGTAEVVEATLKAFGHDIGYRIAHHADLTTPPPIEVHEYTAGPAWDRDGVTIRVAPTDHRPVTPTIGFRIESDGASVVLAGDTVPCDSLDQLAAGADALVHTVIRKDIVTQIPQQRVKDICDYHSSVREAAATANRAGVGTLVMTHYVPAIGPGQEEQWRALAATEFSGRIEVGNDLHRVEVHPRR</sequence>
<comment type="function">
    <text evidence="1">Zinc phosphodiesterase, which displays some tRNA 3'-processing endonuclease activity. Probably involved in tRNA maturation, by removing a 3'-trailer from precursor tRNA.</text>
</comment>
<comment type="catalytic activity">
    <reaction evidence="1">
        <text>Endonucleolytic cleavage of RNA, removing extra 3' nucleotides from tRNA precursor, generating 3' termini of tRNAs. A 3'-hydroxy group is left at the tRNA terminus and a 5'-phosphoryl group is left at the trailer molecule.</text>
        <dbReference type="EC" id="3.1.26.11"/>
    </reaction>
</comment>
<comment type="cofactor">
    <cofactor evidence="1">
        <name>Zn(2+)</name>
        <dbReference type="ChEBI" id="CHEBI:29105"/>
    </cofactor>
    <text evidence="1">Binds 2 Zn(2+) ions.</text>
</comment>
<comment type="subunit">
    <text evidence="1">Homodimer.</text>
</comment>
<comment type="similarity">
    <text evidence="1">Belongs to the RNase Z family.</text>
</comment>
<organism>
    <name type="scientific">Mycobacterium bovis (strain BCG / Tokyo 172 / ATCC 35737 / TMC 1019)</name>
    <dbReference type="NCBI Taxonomy" id="561275"/>
    <lineage>
        <taxon>Bacteria</taxon>
        <taxon>Bacillati</taxon>
        <taxon>Actinomycetota</taxon>
        <taxon>Actinomycetes</taxon>
        <taxon>Mycobacteriales</taxon>
        <taxon>Mycobacteriaceae</taxon>
        <taxon>Mycobacterium</taxon>
        <taxon>Mycobacterium tuberculosis complex</taxon>
    </lineage>
</organism>
<gene>
    <name evidence="1" type="primary">rnz</name>
    <name type="ordered locus">JTY_2417</name>
</gene>
<proteinExistence type="inferred from homology"/>
<feature type="chain" id="PRO_1000187972" description="Ribonuclease Z">
    <location>
        <begin position="1"/>
        <end position="280"/>
    </location>
</feature>
<feature type="active site" description="Proton acceptor" evidence="1">
    <location>
        <position position="65"/>
    </location>
</feature>
<feature type="binding site" evidence="1">
    <location>
        <position position="61"/>
    </location>
    <ligand>
        <name>Zn(2+)</name>
        <dbReference type="ChEBI" id="CHEBI:29105"/>
        <label>1</label>
        <note>catalytic</note>
    </ligand>
</feature>
<feature type="binding site" evidence="1">
    <location>
        <position position="63"/>
    </location>
    <ligand>
        <name>Zn(2+)</name>
        <dbReference type="ChEBI" id="CHEBI:29105"/>
        <label>1</label>
        <note>catalytic</note>
    </ligand>
</feature>
<feature type="binding site" evidence="1">
    <location>
        <position position="65"/>
    </location>
    <ligand>
        <name>Zn(2+)</name>
        <dbReference type="ChEBI" id="CHEBI:29105"/>
        <label>2</label>
        <note>catalytic</note>
    </ligand>
</feature>
<feature type="binding site" evidence="1">
    <location>
        <position position="66"/>
    </location>
    <ligand>
        <name>Zn(2+)</name>
        <dbReference type="ChEBI" id="CHEBI:29105"/>
        <label>2</label>
        <note>catalytic</note>
    </ligand>
</feature>
<feature type="binding site" evidence="1">
    <location>
        <position position="153"/>
    </location>
    <ligand>
        <name>Zn(2+)</name>
        <dbReference type="ChEBI" id="CHEBI:29105"/>
        <label>1</label>
        <note>catalytic</note>
    </ligand>
</feature>
<feature type="binding site" evidence="1">
    <location>
        <position position="176"/>
    </location>
    <ligand>
        <name>Zn(2+)</name>
        <dbReference type="ChEBI" id="CHEBI:29105"/>
        <label>1</label>
        <note>catalytic</note>
    </ligand>
</feature>
<feature type="binding site" evidence="1">
    <location>
        <position position="176"/>
    </location>
    <ligand>
        <name>Zn(2+)</name>
        <dbReference type="ChEBI" id="CHEBI:29105"/>
        <label>2</label>
        <note>catalytic</note>
    </ligand>
</feature>
<feature type="binding site" evidence="1">
    <location>
        <position position="240"/>
    </location>
    <ligand>
        <name>Zn(2+)</name>
        <dbReference type="ChEBI" id="CHEBI:29105"/>
        <label>2</label>
        <note>catalytic</note>
    </ligand>
</feature>
<keyword id="KW-0255">Endonuclease</keyword>
<keyword id="KW-0378">Hydrolase</keyword>
<keyword id="KW-0479">Metal-binding</keyword>
<keyword id="KW-0540">Nuclease</keyword>
<keyword id="KW-0819">tRNA processing</keyword>
<keyword id="KW-0862">Zinc</keyword>
<dbReference type="EC" id="3.1.26.11" evidence="1"/>
<dbReference type="EMBL" id="AP010918">
    <property type="protein sequence ID" value="BAH26701.1"/>
    <property type="molecule type" value="Genomic_DNA"/>
</dbReference>
<dbReference type="RefSeq" id="WP_011799262.1">
    <property type="nucleotide sequence ID" value="NZ_CP014566.1"/>
</dbReference>
<dbReference type="SMR" id="C1AQX2"/>
<dbReference type="KEGG" id="mbt:JTY_2417"/>
<dbReference type="HOGENOM" id="CLU_031317_0_0_11"/>
<dbReference type="GO" id="GO:0042781">
    <property type="term" value="F:3'-tRNA processing endoribonuclease activity"/>
    <property type="evidence" value="ECO:0007669"/>
    <property type="project" value="UniProtKB-UniRule"/>
</dbReference>
<dbReference type="GO" id="GO:0046872">
    <property type="term" value="F:metal ion binding"/>
    <property type="evidence" value="ECO:0007669"/>
    <property type="project" value="UniProtKB-KW"/>
</dbReference>
<dbReference type="CDD" id="cd07719">
    <property type="entry name" value="arylsulfatase_AtsA-like_MBL-fold"/>
    <property type="match status" value="1"/>
</dbReference>
<dbReference type="FunFam" id="3.60.15.10:FF:000085">
    <property type="entry name" value="Ribonuclease Z"/>
    <property type="match status" value="1"/>
</dbReference>
<dbReference type="Gene3D" id="3.60.15.10">
    <property type="entry name" value="Ribonuclease Z/Hydroxyacylglutathione hydrolase-like"/>
    <property type="match status" value="1"/>
</dbReference>
<dbReference type="HAMAP" id="MF_01818">
    <property type="entry name" value="RNase_Z_BN"/>
    <property type="match status" value="1"/>
</dbReference>
<dbReference type="InterPro" id="IPR044094">
    <property type="entry name" value="AtsA-like_MBL-fold"/>
</dbReference>
<dbReference type="InterPro" id="IPR001279">
    <property type="entry name" value="Metallo-B-lactamas"/>
</dbReference>
<dbReference type="InterPro" id="IPR036866">
    <property type="entry name" value="RibonucZ/Hydroxyglut_hydro"/>
</dbReference>
<dbReference type="InterPro" id="IPR013471">
    <property type="entry name" value="RNase_Z/BN"/>
</dbReference>
<dbReference type="NCBIfam" id="NF000806">
    <property type="entry name" value="PRK00055.2-4"/>
    <property type="match status" value="1"/>
</dbReference>
<dbReference type="PANTHER" id="PTHR46018">
    <property type="entry name" value="ZINC PHOSPHODIESTERASE ELAC PROTEIN 1"/>
    <property type="match status" value="1"/>
</dbReference>
<dbReference type="PANTHER" id="PTHR46018:SF2">
    <property type="entry name" value="ZINC PHOSPHODIESTERASE ELAC PROTEIN 1"/>
    <property type="match status" value="1"/>
</dbReference>
<dbReference type="Pfam" id="PF12706">
    <property type="entry name" value="Lactamase_B_2"/>
    <property type="match status" value="1"/>
</dbReference>
<dbReference type="SMART" id="SM00849">
    <property type="entry name" value="Lactamase_B"/>
    <property type="match status" value="1"/>
</dbReference>
<dbReference type="SUPFAM" id="SSF56281">
    <property type="entry name" value="Metallo-hydrolase/oxidoreductase"/>
    <property type="match status" value="1"/>
</dbReference>